<proteinExistence type="evidence at transcript level"/>
<gene>
    <name type="primary">C3orf22</name>
</gene>
<accession>Q8N5N4</accession>
<accession>B3KUS9</accession>
<reference key="1">
    <citation type="journal article" date="2004" name="Nat. Genet.">
        <title>Complete sequencing and characterization of 21,243 full-length human cDNAs.</title>
        <authorList>
            <person name="Ota T."/>
            <person name="Suzuki Y."/>
            <person name="Nishikawa T."/>
            <person name="Otsuki T."/>
            <person name="Sugiyama T."/>
            <person name="Irie R."/>
            <person name="Wakamatsu A."/>
            <person name="Hayashi K."/>
            <person name="Sato H."/>
            <person name="Nagai K."/>
            <person name="Kimura K."/>
            <person name="Makita H."/>
            <person name="Sekine M."/>
            <person name="Obayashi M."/>
            <person name="Nishi T."/>
            <person name="Shibahara T."/>
            <person name="Tanaka T."/>
            <person name="Ishii S."/>
            <person name="Yamamoto J."/>
            <person name="Saito K."/>
            <person name="Kawai Y."/>
            <person name="Isono Y."/>
            <person name="Nakamura Y."/>
            <person name="Nagahari K."/>
            <person name="Murakami K."/>
            <person name="Yasuda T."/>
            <person name="Iwayanagi T."/>
            <person name="Wagatsuma M."/>
            <person name="Shiratori A."/>
            <person name="Sudo H."/>
            <person name="Hosoiri T."/>
            <person name="Kaku Y."/>
            <person name="Kodaira H."/>
            <person name="Kondo H."/>
            <person name="Sugawara M."/>
            <person name="Takahashi M."/>
            <person name="Kanda K."/>
            <person name="Yokoi T."/>
            <person name="Furuya T."/>
            <person name="Kikkawa E."/>
            <person name="Omura Y."/>
            <person name="Abe K."/>
            <person name="Kamihara K."/>
            <person name="Katsuta N."/>
            <person name="Sato K."/>
            <person name="Tanikawa M."/>
            <person name="Yamazaki M."/>
            <person name="Ninomiya K."/>
            <person name="Ishibashi T."/>
            <person name="Yamashita H."/>
            <person name="Murakawa K."/>
            <person name="Fujimori K."/>
            <person name="Tanai H."/>
            <person name="Kimata M."/>
            <person name="Watanabe M."/>
            <person name="Hiraoka S."/>
            <person name="Chiba Y."/>
            <person name="Ishida S."/>
            <person name="Ono Y."/>
            <person name="Takiguchi S."/>
            <person name="Watanabe S."/>
            <person name="Yosida M."/>
            <person name="Hotuta T."/>
            <person name="Kusano J."/>
            <person name="Kanehori K."/>
            <person name="Takahashi-Fujii A."/>
            <person name="Hara H."/>
            <person name="Tanase T.-O."/>
            <person name="Nomura Y."/>
            <person name="Togiya S."/>
            <person name="Komai F."/>
            <person name="Hara R."/>
            <person name="Takeuchi K."/>
            <person name="Arita M."/>
            <person name="Imose N."/>
            <person name="Musashino K."/>
            <person name="Yuuki H."/>
            <person name="Oshima A."/>
            <person name="Sasaki N."/>
            <person name="Aotsuka S."/>
            <person name="Yoshikawa Y."/>
            <person name="Matsunawa H."/>
            <person name="Ichihara T."/>
            <person name="Shiohata N."/>
            <person name="Sano S."/>
            <person name="Moriya S."/>
            <person name="Momiyama H."/>
            <person name="Satoh N."/>
            <person name="Takami S."/>
            <person name="Terashima Y."/>
            <person name="Suzuki O."/>
            <person name="Nakagawa S."/>
            <person name="Senoh A."/>
            <person name="Mizoguchi H."/>
            <person name="Goto Y."/>
            <person name="Shimizu F."/>
            <person name="Wakebe H."/>
            <person name="Hishigaki H."/>
            <person name="Watanabe T."/>
            <person name="Sugiyama A."/>
            <person name="Takemoto M."/>
            <person name="Kawakami B."/>
            <person name="Yamazaki M."/>
            <person name="Watanabe K."/>
            <person name="Kumagai A."/>
            <person name="Itakura S."/>
            <person name="Fukuzumi Y."/>
            <person name="Fujimori Y."/>
            <person name="Komiyama M."/>
            <person name="Tashiro H."/>
            <person name="Tanigami A."/>
            <person name="Fujiwara T."/>
            <person name="Ono T."/>
            <person name="Yamada K."/>
            <person name="Fujii Y."/>
            <person name="Ozaki K."/>
            <person name="Hirao M."/>
            <person name="Ohmori Y."/>
            <person name="Kawabata A."/>
            <person name="Hikiji T."/>
            <person name="Kobatake N."/>
            <person name="Inagaki H."/>
            <person name="Ikema Y."/>
            <person name="Okamoto S."/>
            <person name="Okitani R."/>
            <person name="Kawakami T."/>
            <person name="Noguchi S."/>
            <person name="Itoh T."/>
            <person name="Shigeta K."/>
            <person name="Senba T."/>
            <person name="Matsumura K."/>
            <person name="Nakajima Y."/>
            <person name="Mizuno T."/>
            <person name="Morinaga M."/>
            <person name="Sasaki M."/>
            <person name="Togashi T."/>
            <person name="Oyama M."/>
            <person name="Hata H."/>
            <person name="Watanabe M."/>
            <person name="Komatsu T."/>
            <person name="Mizushima-Sugano J."/>
            <person name="Satoh T."/>
            <person name="Shirai Y."/>
            <person name="Takahashi Y."/>
            <person name="Nakagawa K."/>
            <person name="Okumura K."/>
            <person name="Nagase T."/>
            <person name="Nomura N."/>
            <person name="Kikuchi H."/>
            <person name="Masuho Y."/>
            <person name="Yamashita R."/>
            <person name="Nakai K."/>
            <person name="Yada T."/>
            <person name="Nakamura Y."/>
            <person name="Ohara O."/>
            <person name="Isogai T."/>
            <person name="Sugano S."/>
        </authorList>
    </citation>
    <scope>NUCLEOTIDE SEQUENCE [LARGE SCALE MRNA] (ISOFORM 2)</scope>
    <source>
        <tissue>Testis</tissue>
    </source>
</reference>
<reference key="2">
    <citation type="journal article" date="2006" name="Nature">
        <title>The DNA sequence, annotation and analysis of human chromosome 3.</title>
        <authorList>
            <person name="Muzny D.M."/>
            <person name="Scherer S.E."/>
            <person name="Kaul R."/>
            <person name="Wang J."/>
            <person name="Yu J."/>
            <person name="Sudbrak R."/>
            <person name="Buhay C.J."/>
            <person name="Chen R."/>
            <person name="Cree A."/>
            <person name="Ding Y."/>
            <person name="Dugan-Rocha S."/>
            <person name="Gill R."/>
            <person name="Gunaratne P."/>
            <person name="Harris R.A."/>
            <person name="Hawes A.C."/>
            <person name="Hernandez J."/>
            <person name="Hodgson A.V."/>
            <person name="Hume J."/>
            <person name="Jackson A."/>
            <person name="Khan Z.M."/>
            <person name="Kovar-Smith C."/>
            <person name="Lewis L.R."/>
            <person name="Lozado R.J."/>
            <person name="Metzker M.L."/>
            <person name="Milosavljevic A."/>
            <person name="Miner G.R."/>
            <person name="Morgan M.B."/>
            <person name="Nazareth L.V."/>
            <person name="Scott G."/>
            <person name="Sodergren E."/>
            <person name="Song X.-Z."/>
            <person name="Steffen D."/>
            <person name="Wei S."/>
            <person name="Wheeler D.A."/>
            <person name="Wright M.W."/>
            <person name="Worley K.C."/>
            <person name="Yuan Y."/>
            <person name="Zhang Z."/>
            <person name="Adams C.Q."/>
            <person name="Ansari-Lari M.A."/>
            <person name="Ayele M."/>
            <person name="Brown M.J."/>
            <person name="Chen G."/>
            <person name="Chen Z."/>
            <person name="Clendenning J."/>
            <person name="Clerc-Blankenburg K.P."/>
            <person name="Chen R."/>
            <person name="Chen Z."/>
            <person name="Davis C."/>
            <person name="Delgado O."/>
            <person name="Dinh H.H."/>
            <person name="Dong W."/>
            <person name="Draper H."/>
            <person name="Ernst S."/>
            <person name="Fu G."/>
            <person name="Gonzalez-Garay M.L."/>
            <person name="Garcia D.K."/>
            <person name="Gillett W."/>
            <person name="Gu J."/>
            <person name="Hao B."/>
            <person name="Haugen E."/>
            <person name="Havlak P."/>
            <person name="He X."/>
            <person name="Hennig S."/>
            <person name="Hu S."/>
            <person name="Huang W."/>
            <person name="Jackson L.R."/>
            <person name="Jacob L.S."/>
            <person name="Kelly S.H."/>
            <person name="Kube M."/>
            <person name="Levy R."/>
            <person name="Li Z."/>
            <person name="Liu B."/>
            <person name="Liu J."/>
            <person name="Liu W."/>
            <person name="Lu J."/>
            <person name="Maheshwari M."/>
            <person name="Nguyen B.-V."/>
            <person name="Okwuonu G.O."/>
            <person name="Palmeiri A."/>
            <person name="Pasternak S."/>
            <person name="Perez L.M."/>
            <person name="Phelps K.A."/>
            <person name="Plopper F.J."/>
            <person name="Qiang B."/>
            <person name="Raymond C."/>
            <person name="Rodriguez R."/>
            <person name="Saenphimmachak C."/>
            <person name="Santibanez J."/>
            <person name="Shen H."/>
            <person name="Shen Y."/>
            <person name="Subramanian S."/>
            <person name="Tabor P.E."/>
            <person name="Verduzco D."/>
            <person name="Waldron L."/>
            <person name="Wang J."/>
            <person name="Wang J."/>
            <person name="Wang Q."/>
            <person name="Williams G.A."/>
            <person name="Wong G.K.-S."/>
            <person name="Yao Z."/>
            <person name="Zhang J."/>
            <person name="Zhang X."/>
            <person name="Zhao G."/>
            <person name="Zhou J."/>
            <person name="Zhou Y."/>
            <person name="Nelson D."/>
            <person name="Lehrach H."/>
            <person name="Reinhardt R."/>
            <person name="Naylor S.L."/>
            <person name="Yang H."/>
            <person name="Olson M."/>
            <person name="Weinstock G."/>
            <person name="Gibbs R.A."/>
        </authorList>
    </citation>
    <scope>NUCLEOTIDE SEQUENCE [LARGE SCALE GENOMIC DNA]</scope>
</reference>
<reference key="3">
    <citation type="journal article" date="2004" name="Genome Res.">
        <title>The status, quality, and expansion of the NIH full-length cDNA project: the Mammalian Gene Collection (MGC).</title>
        <authorList>
            <consortium name="The MGC Project Team"/>
        </authorList>
    </citation>
    <scope>NUCLEOTIDE SEQUENCE [LARGE SCALE MRNA] (ISOFORM 1)</scope>
    <source>
        <tissue>Brain</tissue>
    </source>
</reference>
<reference key="4">
    <citation type="journal article" date="2019" name="J. Proteome Res.">
        <title>Cell Type-Specific Expression of Testis Elevated Genes Based on Transcriptomics and Antibody-Based Proteomics.</title>
        <authorList>
            <person name="Pineau C."/>
            <person name="Hikmet F."/>
            <person name="Zhang C."/>
            <person name="Oksvold P."/>
            <person name="Chen S."/>
            <person name="Fagerberg L."/>
            <person name="Uhlen M."/>
            <person name="Lindskog C."/>
        </authorList>
    </citation>
    <scope>SUBCELLULAR LOCATION</scope>
</reference>
<feature type="chain" id="PRO_0000234430" description="Uncharacterized protein C3orf22">
    <location>
        <begin position="1"/>
        <end position="141"/>
    </location>
</feature>
<feature type="splice variant" id="VSP_056902" description="In isoform 2." evidence="2">
    <original>LGAPDFTSPSGSCPAPLPAPSPPPLCNLWELKLLSRRFPRQLAFLLSTRHTEAACPQTSKAAGLSRGLS</original>
    <variation>VGVRIKKSMNVTSRTLSQMYTHTGKWAPFH</variation>
    <location>
        <begin position="73"/>
        <end position="141"/>
    </location>
</feature>
<comment type="subcellular location">
    <subcellularLocation>
        <location evidence="1">Cytoplasm</location>
    </subcellularLocation>
</comment>
<comment type="alternative products">
    <event type="alternative splicing"/>
    <isoform>
        <id>Q8N5N4-1</id>
        <name>1</name>
        <sequence type="displayed"/>
    </isoform>
    <isoform>
        <id>Q8N5N4-2</id>
        <name>2</name>
        <sequence type="described" ref="VSP_056902"/>
    </isoform>
</comment>
<evidence type="ECO:0000269" key="1">
    <source>
    </source>
</evidence>
<evidence type="ECO:0000303" key="2">
    <source>
    </source>
</evidence>
<organism>
    <name type="scientific">Homo sapiens</name>
    <name type="common">Human</name>
    <dbReference type="NCBI Taxonomy" id="9606"/>
    <lineage>
        <taxon>Eukaryota</taxon>
        <taxon>Metazoa</taxon>
        <taxon>Chordata</taxon>
        <taxon>Craniata</taxon>
        <taxon>Vertebrata</taxon>
        <taxon>Euteleostomi</taxon>
        <taxon>Mammalia</taxon>
        <taxon>Eutheria</taxon>
        <taxon>Euarchontoglires</taxon>
        <taxon>Primates</taxon>
        <taxon>Haplorrhini</taxon>
        <taxon>Catarrhini</taxon>
        <taxon>Hominidae</taxon>
        <taxon>Homo</taxon>
    </lineage>
</organism>
<keyword id="KW-0025">Alternative splicing</keyword>
<keyword id="KW-0963">Cytoplasm</keyword>
<keyword id="KW-1185">Reference proteome</keyword>
<dbReference type="EMBL" id="AK097841">
    <property type="protein sequence ID" value="BAG53541.1"/>
    <property type="molecule type" value="mRNA"/>
</dbReference>
<dbReference type="EMBL" id="AC024558">
    <property type="status" value="NOT_ANNOTATED_CDS"/>
    <property type="molecule type" value="Genomic_DNA"/>
</dbReference>
<dbReference type="EMBL" id="BC032025">
    <property type="protein sequence ID" value="AAH32025.1"/>
    <property type="molecule type" value="mRNA"/>
</dbReference>
<dbReference type="CCDS" id="CCDS3040.1">
    <molecule id="Q8N5N4-1"/>
</dbReference>
<dbReference type="RefSeq" id="NP_689746.1">
    <molecule id="Q8N5N4-1"/>
    <property type="nucleotide sequence ID" value="NM_152533.3"/>
</dbReference>
<dbReference type="RefSeq" id="XP_016861240.1">
    <molecule id="Q8N5N4-1"/>
    <property type="nucleotide sequence ID" value="XM_017005751.2"/>
</dbReference>
<dbReference type="RefSeq" id="XP_016861241.1">
    <molecule id="Q8N5N4-1"/>
    <property type="nucleotide sequence ID" value="XM_017005752.2"/>
</dbReference>
<dbReference type="RefSeq" id="XP_016861242.1">
    <property type="nucleotide sequence ID" value="XM_017005753.1"/>
</dbReference>
<dbReference type="RefSeq" id="XP_054201335.1">
    <molecule id="Q8N5N4-1"/>
    <property type="nucleotide sequence ID" value="XM_054345360.1"/>
</dbReference>
<dbReference type="RefSeq" id="XP_054201336.1">
    <molecule id="Q8N5N4-1"/>
    <property type="nucleotide sequence ID" value="XM_054345361.1"/>
</dbReference>
<dbReference type="STRING" id="9606.ENSP00000316644"/>
<dbReference type="iPTMnet" id="Q8N5N4"/>
<dbReference type="PhosphoSitePlus" id="Q8N5N4"/>
<dbReference type="BioMuta" id="C3orf22"/>
<dbReference type="PaxDb" id="9606-ENSP00000316644"/>
<dbReference type="PeptideAtlas" id="Q8N5N4"/>
<dbReference type="ProteomicsDB" id="3731"/>
<dbReference type="ProteomicsDB" id="72077">
    <molecule id="Q8N5N4-1"/>
</dbReference>
<dbReference type="Antibodypedia" id="58182">
    <property type="antibodies" value="30 antibodies from 9 providers"/>
</dbReference>
<dbReference type="DNASU" id="152065"/>
<dbReference type="Ensembl" id="ENST00000318225.3">
    <molecule id="Q8N5N4-1"/>
    <property type="protein sequence ID" value="ENSP00000316644.2"/>
    <property type="gene ID" value="ENSG00000180697.9"/>
</dbReference>
<dbReference type="Ensembl" id="ENST00000505070.5">
    <molecule id="Q8N5N4-2"/>
    <property type="protein sequence ID" value="ENSP00000422064.1"/>
    <property type="gene ID" value="ENSG00000180697.9"/>
</dbReference>
<dbReference type="GeneID" id="152065"/>
<dbReference type="KEGG" id="hsa:152065"/>
<dbReference type="MANE-Select" id="ENST00000318225.3">
    <property type="protein sequence ID" value="ENSP00000316644.2"/>
    <property type="RefSeq nucleotide sequence ID" value="NM_152533.3"/>
    <property type="RefSeq protein sequence ID" value="NP_689746.1"/>
</dbReference>
<dbReference type="UCSC" id="uc003ejb.4">
    <molecule id="Q8N5N4-1"/>
    <property type="organism name" value="human"/>
</dbReference>
<dbReference type="AGR" id="HGNC:28534"/>
<dbReference type="CTD" id="152065"/>
<dbReference type="DisGeNET" id="152065"/>
<dbReference type="GeneCards" id="C3orf22"/>
<dbReference type="HGNC" id="HGNC:28534">
    <property type="gene designation" value="C3orf22"/>
</dbReference>
<dbReference type="HPA" id="ENSG00000180697">
    <property type="expression patterns" value="Tissue enriched (testis)"/>
</dbReference>
<dbReference type="neXtProt" id="NX_Q8N5N4"/>
<dbReference type="OpenTargets" id="ENSG00000180697"/>
<dbReference type="PharmGKB" id="PA142672383"/>
<dbReference type="VEuPathDB" id="HostDB:ENSG00000180697"/>
<dbReference type="eggNOG" id="ENOG502TF7C">
    <property type="taxonomic scope" value="Eukaryota"/>
</dbReference>
<dbReference type="GeneTree" id="ENSGT00390000004778"/>
<dbReference type="HOGENOM" id="CLU_2276506_0_0_1"/>
<dbReference type="InParanoid" id="Q8N5N4"/>
<dbReference type="OMA" id="HTEAACP"/>
<dbReference type="OrthoDB" id="9630190at2759"/>
<dbReference type="PAN-GO" id="Q8N5N4">
    <property type="GO annotations" value="0 GO annotations based on evolutionary models"/>
</dbReference>
<dbReference type="PhylomeDB" id="Q8N5N4"/>
<dbReference type="TreeFam" id="TF338341"/>
<dbReference type="PathwayCommons" id="Q8N5N4"/>
<dbReference type="BioGRID-ORCS" id="152065">
    <property type="hits" value="11 hits in 1120 CRISPR screens"/>
</dbReference>
<dbReference type="GenomeRNAi" id="152065"/>
<dbReference type="Pharos" id="Q8N5N4">
    <property type="development level" value="Tdark"/>
</dbReference>
<dbReference type="PRO" id="PR:Q8N5N4"/>
<dbReference type="Proteomes" id="UP000005640">
    <property type="component" value="Chromosome 3"/>
</dbReference>
<dbReference type="RNAct" id="Q8N5N4">
    <property type="molecule type" value="protein"/>
</dbReference>
<dbReference type="Bgee" id="ENSG00000180697">
    <property type="expression patterns" value="Expressed in right testis and 33 other cell types or tissues"/>
</dbReference>
<dbReference type="GO" id="GO:0005737">
    <property type="term" value="C:cytoplasm"/>
    <property type="evidence" value="ECO:0000314"/>
    <property type="project" value="UniProtKB"/>
</dbReference>
<dbReference type="InterPro" id="IPR038782">
    <property type="entry name" value="C3orf22"/>
</dbReference>
<dbReference type="PANTHER" id="PTHR37875:SF1">
    <property type="entry name" value="CHROMOSOME 3 OPEN READING FRAME 22"/>
    <property type="match status" value="1"/>
</dbReference>
<dbReference type="PANTHER" id="PTHR37875">
    <property type="entry name" value="HYPOTHETICAL PROTEIN LOC685964"/>
    <property type="match status" value="1"/>
</dbReference>
<sequence length="141" mass="15686">MDSSACKKSHQSKKWRIQAQENFAKKFPYRLSWLTEPDPEPLQPWEVTNDSNTVQLPLQKRLVPTRSIPVRGLGAPDFTSPSGSCPAPLPAPSPPPLCNLWELKLLSRRFPRQLAFLLSTRHTEAACPQTSKAAGLSRGLS</sequence>
<protein>
    <recommendedName>
        <fullName>Uncharacterized protein C3orf22</fullName>
    </recommendedName>
</protein>
<name>CC022_HUMAN</name>